<name>CLMP_HUMAN</name>
<keyword id="KW-0965">Cell junction</keyword>
<keyword id="KW-1003">Cell membrane</keyword>
<keyword id="KW-0225">Disease variant</keyword>
<keyword id="KW-1015">Disulfide bond</keyword>
<keyword id="KW-0325">Glycoprotein</keyword>
<keyword id="KW-0393">Immunoglobulin domain</keyword>
<keyword id="KW-0472">Membrane</keyword>
<keyword id="KW-1267">Proteomics identification</keyword>
<keyword id="KW-1185">Reference proteome</keyword>
<keyword id="KW-0677">Repeat</keyword>
<keyword id="KW-0732">Signal</keyword>
<keyword id="KW-0796">Tight junction</keyword>
<keyword id="KW-0812">Transmembrane</keyword>
<keyword id="KW-1133">Transmembrane helix</keyword>
<evidence type="ECO:0000255" key="1"/>
<evidence type="ECO:0000255" key="2">
    <source>
        <dbReference type="PROSITE-ProRule" id="PRU00114"/>
    </source>
</evidence>
<evidence type="ECO:0000256" key="3">
    <source>
        <dbReference type="SAM" id="MobiDB-lite"/>
    </source>
</evidence>
<evidence type="ECO:0000269" key="4">
    <source>
    </source>
</evidence>
<evidence type="ECO:0000269" key="5">
    <source>
    </source>
</evidence>
<evidence type="ECO:0000269" key="6">
    <source>
    </source>
</evidence>
<evidence type="ECO:0000305" key="7"/>
<protein>
    <recommendedName>
        <fullName>CXADR-like membrane protein</fullName>
    </recommendedName>
    <alternativeName>
        <fullName>Adipocyte adhesion molecule</fullName>
    </alternativeName>
    <alternativeName>
        <fullName>Coxsackie- and adenovirus receptor-like membrane protein</fullName>
        <shortName>CAR-like membrane protein</shortName>
    </alternativeName>
</protein>
<reference key="1">
    <citation type="journal article" date="2005" name="Biochem. J.">
        <title>Identification of adipocyte adhesion molecule (ACAM), a novel CTX gene family, implicated in adipocyte maturation and development of obesity.</title>
        <authorList>
            <person name="Eguchi J."/>
            <person name="Wada J."/>
            <person name="Hida K."/>
            <person name="Zhang H."/>
            <person name="Matsuoka T."/>
            <person name="Baba M."/>
            <person name="Hashimoto I."/>
            <person name="Shikata K."/>
            <person name="Ogawa N."/>
            <person name="Makino H."/>
        </authorList>
    </citation>
    <scope>NUCLEOTIDE SEQUENCE [MRNA]</scope>
    <scope>FUNCTION</scope>
    <scope>INDUCTION</scope>
    <scope>TISSUE SPECIFICITY</scope>
</reference>
<reference key="2">
    <citation type="journal article" date="2003" name="Genome Res.">
        <title>The secreted protein discovery initiative (SPDI), a large-scale effort to identify novel human secreted and transmembrane proteins: a bioinformatics assessment.</title>
        <authorList>
            <person name="Clark H.F."/>
            <person name="Gurney A.L."/>
            <person name="Abaya E."/>
            <person name="Baker K."/>
            <person name="Baldwin D.T."/>
            <person name="Brush J."/>
            <person name="Chen J."/>
            <person name="Chow B."/>
            <person name="Chui C."/>
            <person name="Crowley C."/>
            <person name="Currell B."/>
            <person name="Deuel B."/>
            <person name="Dowd P."/>
            <person name="Eaton D."/>
            <person name="Foster J.S."/>
            <person name="Grimaldi C."/>
            <person name="Gu Q."/>
            <person name="Hass P.E."/>
            <person name="Heldens S."/>
            <person name="Huang A."/>
            <person name="Kim H.S."/>
            <person name="Klimowski L."/>
            <person name="Jin Y."/>
            <person name="Johnson S."/>
            <person name="Lee J."/>
            <person name="Lewis L."/>
            <person name="Liao D."/>
            <person name="Mark M.R."/>
            <person name="Robbie E."/>
            <person name="Sanchez C."/>
            <person name="Schoenfeld J."/>
            <person name="Seshagiri S."/>
            <person name="Simmons L."/>
            <person name="Singh J."/>
            <person name="Smith V."/>
            <person name="Stinson J."/>
            <person name="Vagts A."/>
            <person name="Vandlen R.L."/>
            <person name="Watanabe C."/>
            <person name="Wieand D."/>
            <person name="Woods K."/>
            <person name="Xie M.-H."/>
            <person name="Yansura D.G."/>
            <person name="Yi S."/>
            <person name="Yu G."/>
            <person name="Yuan J."/>
            <person name="Zhang M."/>
            <person name="Zhang Z."/>
            <person name="Goddard A.D."/>
            <person name="Wood W.I."/>
            <person name="Godowski P.J."/>
            <person name="Gray A.M."/>
        </authorList>
    </citation>
    <scope>NUCLEOTIDE SEQUENCE [LARGE SCALE MRNA]</scope>
</reference>
<reference key="3">
    <citation type="journal article" date="2004" name="Nat. Genet.">
        <title>Complete sequencing and characterization of 21,243 full-length human cDNAs.</title>
        <authorList>
            <person name="Ota T."/>
            <person name="Suzuki Y."/>
            <person name="Nishikawa T."/>
            <person name="Otsuki T."/>
            <person name="Sugiyama T."/>
            <person name="Irie R."/>
            <person name="Wakamatsu A."/>
            <person name="Hayashi K."/>
            <person name="Sato H."/>
            <person name="Nagai K."/>
            <person name="Kimura K."/>
            <person name="Makita H."/>
            <person name="Sekine M."/>
            <person name="Obayashi M."/>
            <person name="Nishi T."/>
            <person name="Shibahara T."/>
            <person name="Tanaka T."/>
            <person name="Ishii S."/>
            <person name="Yamamoto J."/>
            <person name="Saito K."/>
            <person name="Kawai Y."/>
            <person name="Isono Y."/>
            <person name="Nakamura Y."/>
            <person name="Nagahari K."/>
            <person name="Murakami K."/>
            <person name="Yasuda T."/>
            <person name="Iwayanagi T."/>
            <person name="Wagatsuma M."/>
            <person name="Shiratori A."/>
            <person name="Sudo H."/>
            <person name="Hosoiri T."/>
            <person name="Kaku Y."/>
            <person name="Kodaira H."/>
            <person name="Kondo H."/>
            <person name="Sugawara M."/>
            <person name="Takahashi M."/>
            <person name="Kanda K."/>
            <person name="Yokoi T."/>
            <person name="Furuya T."/>
            <person name="Kikkawa E."/>
            <person name="Omura Y."/>
            <person name="Abe K."/>
            <person name="Kamihara K."/>
            <person name="Katsuta N."/>
            <person name="Sato K."/>
            <person name="Tanikawa M."/>
            <person name="Yamazaki M."/>
            <person name="Ninomiya K."/>
            <person name="Ishibashi T."/>
            <person name="Yamashita H."/>
            <person name="Murakawa K."/>
            <person name="Fujimori K."/>
            <person name="Tanai H."/>
            <person name="Kimata M."/>
            <person name="Watanabe M."/>
            <person name="Hiraoka S."/>
            <person name="Chiba Y."/>
            <person name="Ishida S."/>
            <person name="Ono Y."/>
            <person name="Takiguchi S."/>
            <person name="Watanabe S."/>
            <person name="Yosida M."/>
            <person name="Hotuta T."/>
            <person name="Kusano J."/>
            <person name="Kanehori K."/>
            <person name="Takahashi-Fujii A."/>
            <person name="Hara H."/>
            <person name="Tanase T.-O."/>
            <person name="Nomura Y."/>
            <person name="Togiya S."/>
            <person name="Komai F."/>
            <person name="Hara R."/>
            <person name="Takeuchi K."/>
            <person name="Arita M."/>
            <person name="Imose N."/>
            <person name="Musashino K."/>
            <person name="Yuuki H."/>
            <person name="Oshima A."/>
            <person name="Sasaki N."/>
            <person name="Aotsuka S."/>
            <person name="Yoshikawa Y."/>
            <person name="Matsunawa H."/>
            <person name="Ichihara T."/>
            <person name="Shiohata N."/>
            <person name="Sano S."/>
            <person name="Moriya S."/>
            <person name="Momiyama H."/>
            <person name="Satoh N."/>
            <person name="Takami S."/>
            <person name="Terashima Y."/>
            <person name="Suzuki O."/>
            <person name="Nakagawa S."/>
            <person name="Senoh A."/>
            <person name="Mizoguchi H."/>
            <person name="Goto Y."/>
            <person name="Shimizu F."/>
            <person name="Wakebe H."/>
            <person name="Hishigaki H."/>
            <person name="Watanabe T."/>
            <person name="Sugiyama A."/>
            <person name="Takemoto M."/>
            <person name="Kawakami B."/>
            <person name="Yamazaki M."/>
            <person name="Watanabe K."/>
            <person name="Kumagai A."/>
            <person name="Itakura S."/>
            <person name="Fukuzumi Y."/>
            <person name="Fujimori Y."/>
            <person name="Komiyama M."/>
            <person name="Tashiro H."/>
            <person name="Tanigami A."/>
            <person name="Fujiwara T."/>
            <person name="Ono T."/>
            <person name="Yamada K."/>
            <person name="Fujii Y."/>
            <person name="Ozaki K."/>
            <person name="Hirao M."/>
            <person name="Ohmori Y."/>
            <person name="Kawabata A."/>
            <person name="Hikiji T."/>
            <person name="Kobatake N."/>
            <person name="Inagaki H."/>
            <person name="Ikema Y."/>
            <person name="Okamoto S."/>
            <person name="Okitani R."/>
            <person name="Kawakami T."/>
            <person name="Noguchi S."/>
            <person name="Itoh T."/>
            <person name="Shigeta K."/>
            <person name="Senba T."/>
            <person name="Matsumura K."/>
            <person name="Nakajima Y."/>
            <person name="Mizuno T."/>
            <person name="Morinaga M."/>
            <person name="Sasaki M."/>
            <person name="Togashi T."/>
            <person name="Oyama M."/>
            <person name="Hata H."/>
            <person name="Watanabe M."/>
            <person name="Komatsu T."/>
            <person name="Mizushima-Sugano J."/>
            <person name="Satoh T."/>
            <person name="Shirai Y."/>
            <person name="Takahashi Y."/>
            <person name="Nakagawa K."/>
            <person name="Okumura K."/>
            <person name="Nagase T."/>
            <person name="Nomura N."/>
            <person name="Kikuchi H."/>
            <person name="Masuho Y."/>
            <person name="Yamashita R."/>
            <person name="Nakai K."/>
            <person name="Yada T."/>
            <person name="Nakamura Y."/>
            <person name="Ohara O."/>
            <person name="Isogai T."/>
            <person name="Sugano S."/>
        </authorList>
    </citation>
    <scope>NUCLEOTIDE SEQUENCE [LARGE SCALE MRNA]</scope>
</reference>
<reference key="4">
    <citation type="journal article" date="2004" name="Genome Res.">
        <title>The status, quality, and expansion of the NIH full-length cDNA project: the Mammalian Gene Collection (MGC).</title>
        <authorList>
            <consortium name="The MGC Project Team"/>
        </authorList>
    </citation>
    <scope>NUCLEOTIDE SEQUENCE [LARGE SCALE MRNA]</scope>
    <source>
        <tissue>Muscle</tissue>
    </source>
</reference>
<reference key="5">
    <citation type="journal article" date="2004" name="J. Biol. Chem.">
        <title>CLMP, a novel member of the CTX family and a new component of epithelial tight junctions.</title>
        <authorList>
            <person name="Raschperger E."/>
            <person name="Engstrom U."/>
            <person name="Pettersson R.F."/>
            <person name="Fuxe J."/>
        </authorList>
    </citation>
    <scope>IDENTIFICATION</scope>
    <scope>FUNCTION</scope>
    <scope>SUBCELLULAR LOCATION</scope>
    <scope>TISSUE SPECIFICITY</scope>
</reference>
<reference key="6">
    <citation type="journal article" date="2012" name="Gastroenterology">
        <title>CLMP is required for intestinal development, and loss-of-function mutations cause congenital short-bowel syndrome.</title>
        <authorList>
            <person name="Van Der Werf C.S."/>
            <person name="Wabbersen T.D."/>
            <person name="Hsiao N.H."/>
            <person name="Paredes J."/>
            <person name="Etchevers H.C."/>
            <person name="Kroisel P.M."/>
            <person name="Tibboel D."/>
            <person name="Babarit C."/>
            <person name="Schreiber R.A."/>
            <person name="Hoffenberg E.J."/>
            <person name="Vekemans M."/>
            <person name="Zeder S.L."/>
            <person name="Ceccherini I."/>
            <person name="Lyonnet S."/>
            <person name="Ribeiro A.S."/>
            <person name="Seruca R."/>
            <person name="Te Meerman G.J."/>
            <person name="van Ijzendoorn S.C."/>
            <person name="Shepherd I.T."/>
            <person name="Verheij J.B."/>
            <person name="Hofstra R.M."/>
        </authorList>
    </citation>
    <scope>FUNCTION</scope>
    <scope>TISSUE SPECIFICITY</scope>
    <scope>DEVELOPMENTAL STAGE</scope>
    <scope>SUBCELLULAR LOCATION</scope>
    <scope>VARIANT CSBS ASP-124</scope>
    <scope>CHARACTERIZATION OF VARIANT CSBS ASP-124</scope>
</reference>
<gene>
    <name type="primary">CLMP</name>
    <name type="synonym">ACAM</name>
    <name type="synonym">ASAM</name>
    <name type="ORF">UNQ318/PRO363</name>
</gene>
<comment type="function">
    <text evidence="4 5 6">May be involved in the cell-cell adhesion. May play a role in adipocyte differentiation and development of obesity. Is required for normal small intestine development.</text>
</comment>
<comment type="interaction">
    <interactant intactId="EBI-4314260">
        <id>Q9H6B4</id>
    </interactant>
    <interactant intactId="EBI-11911016">
        <id>P80188</id>
        <label>LCN2</label>
    </interactant>
    <organismsDiffer>false</organismsDiffer>
    <experiments>3</experiments>
</comment>
<comment type="subcellular location">
    <subcellularLocation>
        <location evidence="4 6">Cell junction</location>
        <location evidence="4 6">Tight junction</location>
    </subcellularLocation>
    <subcellularLocation>
        <location evidence="7">Cell membrane</location>
        <topology evidence="7">Single-pass type I membrane protein</topology>
    </subcellularLocation>
</comment>
<comment type="tissue specificity">
    <text evidence="4 5 6">Predominantly expressed in epithelial cells within different tissues and in the white adipose tissue. Expressed at high levels in small intestine and placenta, at intermediate levels in the heart, skeletal muscle, colon, spleen, kidney and lung and at low levels in the liver and peripheral blood leukocytes. Highly abundant in the intestine during embryo and fetal development (at protein level).</text>
</comment>
<comment type="developmental stage">
    <text evidence="6">At 7 and 8 weeks of development, it is highly abundant in the rapidly dividing cells of the central and peripheral nervous systems, the mesenchyme of the frontonasal and mandibular processes and the dermamyotome, and it is expressed in the endodermal derivatives of the foregut, midgut, and hindgut, as well as in the liver, lung, esophagus, and trachea. During midterm fetal stages, 18 and 23 weeks of development, increased expression is observed in the intestinal crypts. Midterm liver and kidney tissues strongly express CLMP in the parenchyma of the lobules and cortex, respectively.</text>
</comment>
<comment type="induction">
    <text evidence="5">Up-regulated in mature adipocytes and adipocyte tissue of obese individuals.</text>
</comment>
<comment type="disease" evidence="6">
    <disease id="DI-03743">
        <name>Congenital short bowel syndrome</name>
        <acronym>CSBS</acronym>
        <description>A disease characterized by a shortened small intestine, intestinal malrotation, and malabsorption. The mean length of the small intestine in CSBS patients is approximately 50 cm, compared with a normal length at birth of 190-280 cm. Patients with CSBS may develop severe malnutrition as a result of the hugely reduced absorptive surface of the small intestine. Infants require parenteral nutrition for survival. However, parenteral nutrition itself causes life-threatening complications such as sepsis and liver failure which are associated with a high rate of mortality early in life.</description>
        <dbReference type="MIM" id="615237"/>
    </disease>
    <text>The disease is caused by variants affecting the gene represented in this entry.</text>
</comment>
<organism>
    <name type="scientific">Homo sapiens</name>
    <name type="common">Human</name>
    <dbReference type="NCBI Taxonomy" id="9606"/>
    <lineage>
        <taxon>Eukaryota</taxon>
        <taxon>Metazoa</taxon>
        <taxon>Chordata</taxon>
        <taxon>Craniata</taxon>
        <taxon>Vertebrata</taxon>
        <taxon>Euteleostomi</taxon>
        <taxon>Mammalia</taxon>
        <taxon>Eutheria</taxon>
        <taxon>Euarchontoglires</taxon>
        <taxon>Primates</taxon>
        <taxon>Haplorrhini</taxon>
        <taxon>Catarrhini</taxon>
        <taxon>Hominidae</taxon>
        <taxon>Homo</taxon>
    </lineage>
</organism>
<dbReference type="EMBL" id="AY326422">
    <property type="protein sequence ID" value="AAP88386.1"/>
    <property type="molecule type" value="mRNA"/>
</dbReference>
<dbReference type="EMBL" id="AY358340">
    <property type="protein sequence ID" value="AAQ88706.1"/>
    <property type="molecule type" value="mRNA"/>
</dbReference>
<dbReference type="EMBL" id="AK026068">
    <property type="protein sequence ID" value="BAB15347.1"/>
    <property type="molecule type" value="mRNA"/>
</dbReference>
<dbReference type="EMBL" id="BC009371">
    <property type="protein sequence ID" value="AAH09371.1"/>
    <property type="molecule type" value="mRNA"/>
</dbReference>
<dbReference type="EMBL" id="BK001245">
    <property type="protein sequence ID" value="DAA01139.1"/>
    <property type="molecule type" value="mRNA"/>
</dbReference>
<dbReference type="CCDS" id="CCDS8441.1"/>
<dbReference type="RefSeq" id="NP_079045.1">
    <property type="nucleotide sequence ID" value="NM_024769.5"/>
</dbReference>
<dbReference type="SMR" id="Q9H6B4"/>
<dbReference type="BioGRID" id="122919">
    <property type="interactions" value="13"/>
</dbReference>
<dbReference type="FunCoup" id="Q9H6B4">
    <property type="interactions" value="28"/>
</dbReference>
<dbReference type="IntAct" id="Q9H6B4">
    <property type="interactions" value="7"/>
</dbReference>
<dbReference type="STRING" id="9606.ENSP00000405577"/>
<dbReference type="GlyConnect" id="1161">
    <property type="glycosylation" value="1 N-Linked glycan (1 site)"/>
</dbReference>
<dbReference type="GlyCosmos" id="Q9H6B4">
    <property type="glycosylation" value="2 sites, 1 glycan"/>
</dbReference>
<dbReference type="GlyGen" id="Q9H6B4">
    <property type="glycosylation" value="2 sites, 4 N-linked glycans (2 sites)"/>
</dbReference>
<dbReference type="iPTMnet" id="Q9H6B4"/>
<dbReference type="PhosphoSitePlus" id="Q9H6B4"/>
<dbReference type="BioMuta" id="CLMP"/>
<dbReference type="DMDM" id="74761472"/>
<dbReference type="jPOST" id="Q9H6B4"/>
<dbReference type="MassIVE" id="Q9H6B4"/>
<dbReference type="PaxDb" id="9606-ENSP00000405577"/>
<dbReference type="PeptideAtlas" id="Q9H6B4"/>
<dbReference type="ProteomicsDB" id="80973"/>
<dbReference type="Pumba" id="Q9H6B4"/>
<dbReference type="Antibodypedia" id="1118">
    <property type="antibodies" value="225 antibodies from 29 providers"/>
</dbReference>
<dbReference type="DNASU" id="79827"/>
<dbReference type="Ensembl" id="ENST00000448775.4">
    <property type="protein sequence ID" value="ENSP00000405577.2"/>
    <property type="gene ID" value="ENSG00000166250.13"/>
</dbReference>
<dbReference type="Ensembl" id="ENST00000715744.1">
    <property type="protein sequence ID" value="ENSP00000520511.1"/>
    <property type="gene ID" value="ENSG00000166250.13"/>
</dbReference>
<dbReference type="GeneID" id="79827"/>
<dbReference type="KEGG" id="hsa:79827"/>
<dbReference type="MANE-Select" id="ENST00000448775.4">
    <property type="protein sequence ID" value="ENSP00000405577.2"/>
    <property type="RefSeq nucleotide sequence ID" value="NM_024769.5"/>
    <property type="RefSeq protein sequence ID" value="NP_079045.1"/>
</dbReference>
<dbReference type="UCSC" id="uc001pyt.4">
    <property type="organism name" value="human"/>
</dbReference>
<dbReference type="AGR" id="HGNC:24039"/>
<dbReference type="CTD" id="79827"/>
<dbReference type="DisGeNET" id="79827"/>
<dbReference type="GeneCards" id="CLMP"/>
<dbReference type="HGNC" id="HGNC:24039">
    <property type="gene designation" value="CLMP"/>
</dbReference>
<dbReference type="HPA" id="ENSG00000166250">
    <property type="expression patterns" value="Tissue enhanced (adipose)"/>
</dbReference>
<dbReference type="MalaCards" id="CLMP"/>
<dbReference type="MIM" id="611693">
    <property type="type" value="gene"/>
</dbReference>
<dbReference type="MIM" id="615237">
    <property type="type" value="phenotype"/>
</dbReference>
<dbReference type="neXtProt" id="NX_Q9H6B4"/>
<dbReference type="OpenTargets" id="ENSG00000166250"/>
<dbReference type="Orphanet" id="2301">
    <property type="disease" value="Congenital short bowel syndrome"/>
</dbReference>
<dbReference type="VEuPathDB" id="HostDB:ENSG00000166250"/>
<dbReference type="eggNOG" id="KOG3866">
    <property type="taxonomic scope" value="Eukaryota"/>
</dbReference>
<dbReference type="GeneTree" id="ENSGT00940000161031"/>
<dbReference type="HOGENOM" id="CLU_040549_0_1_1"/>
<dbReference type="InParanoid" id="Q9H6B4"/>
<dbReference type="OMA" id="RYSCKVK"/>
<dbReference type="OrthoDB" id="9446970at2759"/>
<dbReference type="PAN-GO" id="Q9H6B4">
    <property type="GO annotations" value="0 GO annotations based on evolutionary models"/>
</dbReference>
<dbReference type="PhylomeDB" id="Q9H6B4"/>
<dbReference type="TreeFam" id="TF330875"/>
<dbReference type="PathwayCommons" id="Q9H6B4"/>
<dbReference type="SignaLink" id="Q9H6B4"/>
<dbReference type="BioGRID-ORCS" id="79827">
    <property type="hits" value="11 hits in 1140 CRISPR screens"/>
</dbReference>
<dbReference type="ChiTaRS" id="CLMP">
    <property type="organism name" value="human"/>
</dbReference>
<dbReference type="GenomeRNAi" id="79827"/>
<dbReference type="Pharos" id="Q9H6B4">
    <property type="development level" value="Tbio"/>
</dbReference>
<dbReference type="PRO" id="PR:Q9H6B4"/>
<dbReference type="Proteomes" id="UP000005640">
    <property type="component" value="Chromosome 11"/>
</dbReference>
<dbReference type="RNAct" id="Q9H6B4">
    <property type="molecule type" value="protein"/>
</dbReference>
<dbReference type="Bgee" id="ENSG00000166250">
    <property type="expression patterns" value="Expressed in cartilage tissue and 156 other cell types or tissues"/>
</dbReference>
<dbReference type="GO" id="GO:0005923">
    <property type="term" value="C:bicellular tight junction"/>
    <property type="evidence" value="ECO:0000314"/>
    <property type="project" value="UniProtKB"/>
</dbReference>
<dbReference type="GO" id="GO:0009986">
    <property type="term" value="C:cell surface"/>
    <property type="evidence" value="ECO:0007005"/>
    <property type="project" value="UniProtKB"/>
</dbReference>
<dbReference type="GO" id="GO:0005881">
    <property type="term" value="C:cytoplasmic microtubule"/>
    <property type="evidence" value="ECO:0000314"/>
    <property type="project" value="UniProtKB"/>
</dbReference>
<dbReference type="GO" id="GO:0045211">
    <property type="term" value="C:postsynaptic membrane"/>
    <property type="evidence" value="ECO:0007669"/>
    <property type="project" value="Ensembl"/>
</dbReference>
<dbReference type="GO" id="GO:0048565">
    <property type="term" value="P:digestive tract development"/>
    <property type="evidence" value="ECO:0000315"/>
    <property type="project" value="UniProtKB"/>
</dbReference>
<dbReference type="GO" id="GO:0099170">
    <property type="term" value="P:postsynaptic modulation of chemical synaptic transmission"/>
    <property type="evidence" value="ECO:0007669"/>
    <property type="project" value="Ensembl"/>
</dbReference>
<dbReference type="CDD" id="cd00096">
    <property type="entry name" value="Ig"/>
    <property type="match status" value="1"/>
</dbReference>
<dbReference type="CDD" id="cd20960">
    <property type="entry name" value="IgV_CAR_like"/>
    <property type="match status" value="1"/>
</dbReference>
<dbReference type="FunFam" id="2.60.40.10:FF:000764">
    <property type="entry name" value="CXADR like membrane protein"/>
    <property type="match status" value="1"/>
</dbReference>
<dbReference type="FunFam" id="2.60.40.10:FF:000095">
    <property type="entry name" value="immunoglobulin superfamily member 11 isoform X1"/>
    <property type="match status" value="1"/>
</dbReference>
<dbReference type="Gene3D" id="2.60.40.10">
    <property type="entry name" value="Immunoglobulins"/>
    <property type="match status" value="2"/>
</dbReference>
<dbReference type="InterPro" id="IPR042454">
    <property type="entry name" value="CLMP"/>
</dbReference>
<dbReference type="InterPro" id="IPR007110">
    <property type="entry name" value="Ig-like_dom"/>
</dbReference>
<dbReference type="InterPro" id="IPR036179">
    <property type="entry name" value="Ig-like_dom_sf"/>
</dbReference>
<dbReference type="InterPro" id="IPR013783">
    <property type="entry name" value="Ig-like_fold"/>
</dbReference>
<dbReference type="InterPro" id="IPR003599">
    <property type="entry name" value="Ig_sub"/>
</dbReference>
<dbReference type="InterPro" id="IPR003598">
    <property type="entry name" value="Ig_sub2"/>
</dbReference>
<dbReference type="InterPro" id="IPR013106">
    <property type="entry name" value="Ig_V-set"/>
</dbReference>
<dbReference type="PANTHER" id="PTHR44783">
    <property type="entry name" value="CXADR-LIKE MEMBRANE PROTEIN"/>
    <property type="match status" value="1"/>
</dbReference>
<dbReference type="PANTHER" id="PTHR44783:SF1">
    <property type="entry name" value="CXADR-LIKE MEMBRANE PROTEIN"/>
    <property type="match status" value="1"/>
</dbReference>
<dbReference type="Pfam" id="PF13895">
    <property type="entry name" value="Ig_2"/>
    <property type="match status" value="1"/>
</dbReference>
<dbReference type="Pfam" id="PF07686">
    <property type="entry name" value="V-set"/>
    <property type="match status" value="1"/>
</dbReference>
<dbReference type="SMART" id="SM00409">
    <property type="entry name" value="IG"/>
    <property type="match status" value="2"/>
</dbReference>
<dbReference type="SMART" id="SM00408">
    <property type="entry name" value="IGc2"/>
    <property type="match status" value="2"/>
</dbReference>
<dbReference type="SMART" id="SM00406">
    <property type="entry name" value="IGv"/>
    <property type="match status" value="1"/>
</dbReference>
<dbReference type="SUPFAM" id="SSF48726">
    <property type="entry name" value="Immunoglobulin"/>
    <property type="match status" value="2"/>
</dbReference>
<dbReference type="PROSITE" id="PS50835">
    <property type="entry name" value="IG_LIKE"/>
    <property type="match status" value="2"/>
</dbReference>
<accession>Q9H6B4</accession>
<feature type="signal peptide" evidence="1">
    <location>
        <begin position="1"/>
        <end position="18"/>
    </location>
</feature>
<feature type="chain" id="PRO_0000293026" description="CXADR-like membrane protein">
    <location>
        <begin position="19"/>
        <end position="373"/>
    </location>
</feature>
<feature type="topological domain" description="Extracellular" evidence="1">
    <location>
        <begin position="19"/>
        <end position="235"/>
    </location>
</feature>
<feature type="transmembrane region" description="Helical" evidence="1">
    <location>
        <begin position="236"/>
        <end position="256"/>
    </location>
</feature>
<feature type="topological domain" description="Cytoplasmic" evidence="1">
    <location>
        <begin position="257"/>
        <end position="373"/>
    </location>
</feature>
<feature type="domain" description="Ig-like C2-type 1">
    <location>
        <begin position="19"/>
        <end position="127"/>
    </location>
</feature>
<feature type="domain" description="Ig-like C2-type 2">
    <location>
        <begin position="135"/>
        <end position="224"/>
    </location>
</feature>
<feature type="region of interest" description="Disordered" evidence="3">
    <location>
        <begin position="264"/>
        <end position="373"/>
    </location>
</feature>
<feature type="compositionally biased region" description="Basic and acidic residues" evidence="3">
    <location>
        <begin position="264"/>
        <end position="281"/>
    </location>
</feature>
<feature type="compositionally biased region" description="Low complexity" evidence="3">
    <location>
        <begin position="288"/>
        <end position="314"/>
    </location>
</feature>
<feature type="compositionally biased region" description="Polar residues" evidence="3">
    <location>
        <begin position="355"/>
        <end position="373"/>
    </location>
</feature>
<feature type="glycosylation site" description="N-linked (GlcNAc...) asparagine" evidence="1">
    <location>
        <position position="74"/>
    </location>
</feature>
<feature type="glycosylation site" description="N-linked (GlcNAc...) asparagine" evidence="1">
    <location>
        <position position="197"/>
    </location>
</feature>
<feature type="disulfide bond" evidence="2">
    <location>
        <begin position="35"/>
        <end position="111"/>
    </location>
</feature>
<feature type="disulfide bond" evidence="2">
    <location>
        <begin position="153"/>
        <end position="208"/>
    </location>
</feature>
<feature type="sequence variant" id="VAR_049824" description="In dbSNP:rs2276348.">
    <original>R</original>
    <variation>H</variation>
    <location>
        <position position="69"/>
    </location>
</feature>
<feature type="sequence variant" id="VAR_069713" description="In CSBS; affects subcellular location; the mutant protein is localized in the cytoplasm; dbSNP:rs587776967." evidence="6">
    <original>V</original>
    <variation>D</variation>
    <location>
        <position position="124"/>
    </location>
</feature>
<proteinExistence type="evidence at protein level"/>
<sequence>MSLLLLLLLVSYYVGTLGTHTEIKRVAEEKVTLPCHHQLGLPEKDTLDIEWLLTDNEGNQKVVITYSSRHVYNNLTEEQKGRVAFASNFLAGDASLQIEPLKPSDEGRYTCKVKNSGRYVWSHVILKVLVRPSKPKCELEGELTEGSDLTLQCESSSGTEPIVYYWQRIREKEGEDERLPPKSRIDYNHPGRVLLQNLTMSYSGLYQCTAGNEAGKESCVVRVTVQYVQSIGMVAGAVTGIVAGALLIFLLVWLLIRRKDKERYEEEERPNEIREDAEAPKARLVKPSSSSSGSRSSRSGSSSTRSTANSASRSQRTLSTDAAPQPGLATQAYSLVGPEVRGSEPKKVHHANLTKAETTPSMIPSQSRAFQTV</sequence>